<sequence length="642" mass="72562">MSTKIEQLEFQAETRQLLDLMIHSVYSNKDSFLRELISNASDALDKLRLEAFRNKELHVDTSDLHVEIEVDAEKRTLTVRDNGIGMSHDEVVDLIGTLAKSGTADLRRKLKEAKDAAASEELIGQFGIGFYSTFMVADKVTLLTRKAGESEATRWESSGEATYTIEAVDDAPQGSSVTLHLKPEDAEDHLHDYTSERKIKELVKRYSDFIAWPIRMNVERTVPAEGDGEDEVTTTSETINSMKALWARSKDDVSEDEYKEFYKHIAHAWDDPLEVIPMKAEGTFEFQALLFIPSHAPFDLFMRDGKTGVQLYVKRVFIMDDCDQLMPEYLRFVKGVVDAQDLSLNVSREILQQDRQIRAIRRRLTKKVLTTIKDLKTERPDDYRTFWAEFGRAVKEGLMSDTDNRDVLLGISSFASTHSEEELTSLEDYVARMKDGQEQIFYATGESRQLLESSPHMEAFRAKGFEVLLLTDPVDEMWVGAVPEFDGKSFQSIAKGEVDLDTEEDKKAHESEREEQEKDFAGLLSWMADALSEQVKEVRLSTRLTTSPACIVGDAFSMSPALERMYRASGQPVPVTKRILELNPTHPLVTGLREAHGERNEDPALGETAELLYGMALLAEGGELEDPARFTTMLANRLARTV</sequence>
<accession>Q0S467</accession>
<keyword id="KW-0067">ATP-binding</keyword>
<keyword id="KW-0143">Chaperone</keyword>
<keyword id="KW-0963">Cytoplasm</keyword>
<keyword id="KW-0547">Nucleotide-binding</keyword>
<keyword id="KW-0346">Stress response</keyword>
<feature type="chain" id="PRO_0000258521" description="Chaperone protein HtpG">
    <location>
        <begin position="1"/>
        <end position="642"/>
    </location>
</feature>
<feature type="region of interest" description="A; substrate-binding" evidence="1">
    <location>
        <begin position="1"/>
        <end position="348"/>
    </location>
</feature>
<feature type="region of interest" description="B" evidence="1">
    <location>
        <begin position="349"/>
        <end position="564"/>
    </location>
</feature>
<feature type="region of interest" description="C" evidence="1">
    <location>
        <begin position="565"/>
        <end position="642"/>
    </location>
</feature>
<protein>
    <recommendedName>
        <fullName evidence="1">Chaperone protein HtpG</fullName>
    </recommendedName>
    <alternativeName>
        <fullName evidence="1">Heat shock protein HtpG</fullName>
    </alternativeName>
    <alternativeName>
        <fullName evidence="1">High temperature protein G</fullName>
    </alternativeName>
</protein>
<reference key="1">
    <citation type="journal article" date="2006" name="Proc. Natl. Acad. Sci. U.S.A.">
        <title>The complete genome of Rhodococcus sp. RHA1 provides insights into a catabolic powerhouse.</title>
        <authorList>
            <person name="McLeod M.P."/>
            <person name="Warren R.L."/>
            <person name="Hsiao W.W.L."/>
            <person name="Araki N."/>
            <person name="Myhre M."/>
            <person name="Fernandes C."/>
            <person name="Miyazawa D."/>
            <person name="Wong W."/>
            <person name="Lillquist A.L."/>
            <person name="Wang D."/>
            <person name="Dosanjh M."/>
            <person name="Hara H."/>
            <person name="Petrescu A."/>
            <person name="Morin R.D."/>
            <person name="Yang G."/>
            <person name="Stott J.M."/>
            <person name="Schein J.E."/>
            <person name="Shin H."/>
            <person name="Smailus D."/>
            <person name="Siddiqui A.S."/>
            <person name="Marra M.A."/>
            <person name="Jones S.J.M."/>
            <person name="Holt R."/>
            <person name="Brinkman F.S.L."/>
            <person name="Miyauchi K."/>
            <person name="Fukuda M."/>
            <person name="Davies J.E."/>
            <person name="Mohn W.W."/>
            <person name="Eltis L.D."/>
        </authorList>
    </citation>
    <scope>NUCLEOTIDE SEQUENCE [LARGE SCALE GENOMIC DNA]</scope>
    <source>
        <strain>RHA1</strain>
    </source>
</reference>
<name>HTPG_RHOJR</name>
<organism>
    <name type="scientific">Rhodococcus jostii (strain RHA1)</name>
    <dbReference type="NCBI Taxonomy" id="101510"/>
    <lineage>
        <taxon>Bacteria</taxon>
        <taxon>Bacillati</taxon>
        <taxon>Actinomycetota</taxon>
        <taxon>Actinomycetes</taxon>
        <taxon>Mycobacteriales</taxon>
        <taxon>Nocardiaceae</taxon>
        <taxon>Rhodococcus</taxon>
    </lineage>
</organism>
<evidence type="ECO:0000255" key="1">
    <source>
        <dbReference type="HAMAP-Rule" id="MF_00505"/>
    </source>
</evidence>
<dbReference type="EMBL" id="CP000431">
    <property type="protein sequence ID" value="ABG97669.1"/>
    <property type="molecule type" value="Genomic_DNA"/>
</dbReference>
<dbReference type="RefSeq" id="WP_011597982.1">
    <property type="nucleotide sequence ID" value="NC_008268.1"/>
</dbReference>
<dbReference type="SMR" id="Q0S467"/>
<dbReference type="KEGG" id="rha:RHA1_ro05892"/>
<dbReference type="PATRIC" id="fig|101510.16.peg.5935"/>
<dbReference type="eggNOG" id="COG0326">
    <property type="taxonomic scope" value="Bacteria"/>
</dbReference>
<dbReference type="HOGENOM" id="CLU_006684_3_0_11"/>
<dbReference type="OrthoDB" id="9802640at2"/>
<dbReference type="Proteomes" id="UP000008710">
    <property type="component" value="Chromosome"/>
</dbReference>
<dbReference type="GO" id="GO:0005737">
    <property type="term" value="C:cytoplasm"/>
    <property type="evidence" value="ECO:0007669"/>
    <property type="project" value="UniProtKB-SubCell"/>
</dbReference>
<dbReference type="GO" id="GO:0005524">
    <property type="term" value="F:ATP binding"/>
    <property type="evidence" value="ECO:0007669"/>
    <property type="project" value="UniProtKB-UniRule"/>
</dbReference>
<dbReference type="GO" id="GO:0016887">
    <property type="term" value="F:ATP hydrolysis activity"/>
    <property type="evidence" value="ECO:0007669"/>
    <property type="project" value="InterPro"/>
</dbReference>
<dbReference type="GO" id="GO:0140662">
    <property type="term" value="F:ATP-dependent protein folding chaperone"/>
    <property type="evidence" value="ECO:0007669"/>
    <property type="project" value="InterPro"/>
</dbReference>
<dbReference type="GO" id="GO:0051082">
    <property type="term" value="F:unfolded protein binding"/>
    <property type="evidence" value="ECO:0007669"/>
    <property type="project" value="UniProtKB-UniRule"/>
</dbReference>
<dbReference type="CDD" id="cd16927">
    <property type="entry name" value="HATPase_Hsp90-like"/>
    <property type="match status" value="1"/>
</dbReference>
<dbReference type="FunFam" id="1.20.120.790:FF:000006">
    <property type="entry name" value="Chaperone protein HtpG"/>
    <property type="match status" value="1"/>
</dbReference>
<dbReference type="FunFam" id="3.40.50.11260:FF:000005">
    <property type="entry name" value="Heat shock protein 90"/>
    <property type="match status" value="1"/>
</dbReference>
<dbReference type="FunFam" id="3.30.230.80:FF:000002">
    <property type="entry name" value="Molecular chaperone HtpG"/>
    <property type="match status" value="1"/>
</dbReference>
<dbReference type="FunFam" id="3.30.565.10:FF:000009">
    <property type="entry name" value="Molecular chaperone HtpG"/>
    <property type="match status" value="1"/>
</dbReference>
<dbReference type="Gene3D" id="3.30.230.80">
    <property type="match status" value="1"/>
</dbReference>
<dbReference type="Gene3D" id="3.40.50.11260">
    <property type="match status" value="1"/>
</dbReference>
<dbReference type="Gene3D" id="1.20.120.790">
    <property type="entry name" value="Heat shock protein 90, C-terminal domain"/>
    <property type="match status" value="1"/>
</dbReference>
<dbReference type="Gene3D" id="3.30.565.10">
    <property type="entry name" value="Histidine kinase-like ATPase, C-terminal domain"/>
    <property type="match status" value="1"/>
</dbReference>
<dbReference type="HAMAP" id="MF_00505">
    <property type="entry name" value="HSP90"/>
    <property type="match status" value="1"/>
</dbReference>
<dbReference type="InterPro" id="IPR036890">
    <property type="entry name" value="HATPase_C_sf"/>
</dbReference>
<dbReference type="InterPro" id="IPR037196">
    <property type="entry name" value="HSP90_C"/>
</dbReference>
<dbReference type="InterPro" id="IPR001404">
    <property type="entry name" value="Hsp90_fam"/>
</dbReference>
<dbReference type="InterPro" id="IPR020575">
    <property type="entry name" value="Hsp90_N"/>
</dbReference>
<dbReference type="InterPro" id="IPR020568">
    <property type="entry name" value="Ribosomal_Su5_D2-typ_SF"/>
</dbReference>
<dbReference type="NCBIfam" id="NF003555">
    <property type="entry name" value="PRK05218.1"/>
    <property type="match status" value="1"/>
</dbReference>
<dbReference type="PANTHER" id="PTHR11528">
    <property type="entry name" value="HEAT SHOCK PROTEIN 90 FAMILY MEMBER"/>
    <property type="match status" value="1"/>
</dbReference>
<dbReference type="Pfam" id="PF13589">
    <property type="entry name" value="HATPase_c_3"/>
    <property type="match status" value="1"/>
</dbReference>
<dbReference type="Pfam" id="PF00183">
    <property type="entry name" value="HSP90"/>
    <property type="match status" value="2"/>
</dbReference>
<dbReference type="PIRSF" id="PIRSF002583">
    <property type="entry name" value="Hsp90"/>
    <property type="match status" value="1"/>
</dbReference>
<dbReference type="PRINTS" id="PR00775">
    <property type="entry name" value="HEATSHOCK90"/>
</dbReference>
<dbReference type="SMART" id="SM00387">
    <property type="entry name" value="HATPase_c"/>
    <property type="match status" value="1"/>
</dbReference>
<dbReference type="SUPFAM" id="SSF55874">
    <property type="entry name" value="ATPase domain of HSP90 chaperone/DNA topoisomerase II/histidine kinase"/>
    <property type="match status" value="1"/>
</dbReference>
<dbReference type="SUPFAM" id="SSF110942">
    <property type="entry name" value="HSP90 C-terminal domain"/>
    <property type="match status" value="1"/>
</dbReference>
<dbReference type="SUPFAM" id="SSF54211">
    <property type="entry name" value="Ribosomal protein S5 domain 2-like"/>
    <property type="match status" value="1"/>
</dbReference>
<proteinExistence type="inferred from homology"/>
<gene>
    <name evidence="1" type="primary">htpG</name>
    <name type="ordered locus">RHA1_ro05892</name>
</gene>
<comment type="function">
    <text evidence="1">Molecular chaperone. Has ATPase activity.</text>
</comment>
<comment type="subunit">
    <text evidence="1">Homodimer.</text>
</comment>
<comment type="subcellular location">
    <subcellularLocation>
        <location evidence="1">Cytoplasm</location>
    </subcellularLocation>
</comment>
<comment type="similarity">
    <text evidence="1">Belongs to the heat shock protein 90 family.</text>
</comment>